<sequence length="231" mass="23702">MFRKLAAECFGTFWLVFGGCGSAVLAAGFPELGIGFAGVALAFGLTVLTMAFAVGHISGGHFNPAVTIGLWAGGRFPAKEVVGYVIAQVVGGIVAAALLYLIASGKTGFDAAASGFASNGYGEHSPGGYSMLSALVVELVLSAGFLLVIHGATDKFAPAGFAPIAIGLALTLIHLISIPVTNTSVNPARSTAVAIFQGGWALEQLWFFWVVPIVGGIIGGLIYRTLLEKRN</sequence>
<accession>Q8X6K6</accession>
<evidence type="ECO:0000255" key="1">
    <source>
        <dbReference type="HAMAP-Rule" id="MF_01146"/>
    </source>
</evidence>
<organism>
    <name type="scientific">Escherichia coli O157:H7</name>
    <dbReference type="NCBI Taxonomy" id="83334"/>
    <lineage>
        <taxon>Bacteria</taxon>
        <taxon>Pseudomonadati</taxon>
        <taxon>Pseudomonadota</taxon>
        <taxon>Gammaproteobacteria</taxon>
        <taxon>Enterobacterales</taxon>
        <taxon>Enterobacteriaceae</taxon>
        <taxon>Escherichia</taxon>
    </lineage>
</organism>
<gene>
    <name evidence="1" type="primary">aqpZ</name>
    <name type="synonym">bniP</name>
    <name type="ordered locus">Z1109</name>
    <name type="ordered locus">ECs0961</name>
</gene>
<proteinExistence type="inferred from homology"/>
<protein>
    <recommendedName>
        <fullName evidence="1">Aquaporin Z</fullName>
    </recommendedName>
</protein>
<name>AQPZ_ECO57</name>
<comment type="function">
    <text evidence="1">Channel that permits osmotically driven movement of water in both directions. It is involved in the osmoregulation and in the maintenance of cell turgor during volume expansion in rapidly growing cells. It mediates rapid entry or exit of water in response to abrupt changes in osmolarity.</text>
</comment>
<comment type="catalytic activity">
    <reaction evidence="1">
        <text>H2O(in) = H2O(out)</text>
        <dbReference type="Rhea" id="RHEA:29667"/>
        <dbReference type="ChEBI" id="CHEBI:15377"/>
    </reaction>
    <physiologicalReaction direction="left-to-right" evidence="1">
        <dbReference type="Rhea" id="RHEA:29668"/>
    </physiologicalReaction>
    <physiologicalReaction direction="right-to-left" evidence="1">
        <dbReference type="Rhea" id="RHEA:29669"/>
    </physiologicalReaction>
</comment>
<comment type="subunit">
    <text evidence="1">Homotetramer.</text>
</comment>
<comment type="subcellular location">
    <subcellularLocation>
        <location evidence="1">Cell inner membrane</location>
        <topology evidence="1">Multi-pass membrane protein</topology>
    </subcellularLocation>
</comment>
<comment type="domain">
    <text evidence="1">Aquaporins contain two tandem repeats each containing three membrane-spanning domains and a pore-forming loop with the signature motif Asn-Pro-Ala (NPA).</text>
</comment>
<comment type="similarity">
    <text evidence="1">Belongs to the MIP/aquaporin (TC 1.A.8) family.</text>
</comment>
<reference key="1">
    <citation type="journal article" date="2001" name="Nature">
        <title>Genome sequence of enterohaemorrhagic Escherichia coli O157:H7.</title>
        <authorList>
            <person name="Perna N.T."/>
            <person name="Plunkett G. III"/>
            <person name="Burland V."/>
            <person name="Mau B."/>
            <person name="Glasner J.D."/>
            <person name="Rose D.J."/>
            <person name="Mayhew G.F."/>
            <person name="Evans P.S."/>
            <person name="Gregor J."/>
            <person name="Kirkpatrick H.A."/>
            <person name="Posfai G."/>
            <person name="Hackett J."/>
            <person name="Klink S."/>
            <person name="Boutin A."/>
            <person name="Shao Y."/>
            <person name="Miller L."/>
            <person name="Grotbeck E.J."/>
            <person name="Davis N.W."/>
            <person name="Lim A."/>
            <person name="Dimalanta E.T."/>
            <person name="Potamousis K."/>
            <person name="Apodaca J."/>
            <person name="Anantharaman T.S."/>
            <person name="Lin J."/>
            <person name="Yen G."/>
            <person name="Schwartz D.C."/>
            <person name="Welch R.A."/>
            <person name="Blattner F.R."/>
        </authorList>
    </citation>
    <scope>NUCLEOTIDE SEQUENCE [LARGE SCALE GENOMIC DNA]</scope>
    <source>
        <strain>O157:H7 / EDL933 / ATCC 700927 / EHEC</strain>
    </source>
</reference>
<reference key="2">
    <citation type="journal article" date="2001" name="DNA Res.">
        <title>Complete genome sequence of enterohemorrhagic Escherichia coli O157:H7 and genomic comparison with a laboratory strain K-12.</title>
        <authorList>
            <person name="Hayashi T."/>
            <person name="Makino K."/>
            <person name="Ohnishi M."/>
            <person name="Kurokawa K."/>
            <person name="Ishii K."/>
            <person name="Yokoyama K."/>
            <person name="Han C.-G."/>
            <person name="Ohtsubo E."/>
            <person name="Nakayama K."/>
            <person name="Murata T."/>
            <person name="Tanaka M."/>
            <person name="Tobe T."/>
            <person name="Iida T."/>
            <person name="Takami H."/>
            <person name="Honda T."/>
            <person name="Sasakawa C."/>
            <person name="Ogasawara N."/>
            <person name="Yasunaga T."/>
            <person name="Kuhara S."/>
            <person name="Shiba T."/>
            <person name="Hattori M."/>
            <person name="Shinagawa H."/>
        </authorList>
    </citation>
    <scope>NUCLEOTIDE SEQUENCE [LARGE SCALE GENOMIC DNA]</scope>
    <source>
        <strain>O157:H7 / Sakai / RIMD 0509952 / EHEC</strain>
    </source>
</reference>
<feature type="chain" id="PRO_0000063991" description="Aquaporin Z">
    <location>
        <begin position="1"/>
        <end position="231"/>
    </location>
</feature>
<feature type="transmembrane region" description="Helical" evidence="1">
    <location>
        <begin position="9"/>
        <end position="29"/>
    </location>
</feature>
<feature type="transmembrane region" description="Helical" evidence="1">
    <location>
        <begin position="34"/>
        <end position="54"/>
    </location>
</feature>
<feature type="transmembrane region" description="Helical" evidence="1">
    <location>
        <begin position="82"/>
        <end position="102"/>
    </location>
</feature>
<feature type="transmembrane region" description="Helical" evidence="1">
    <location>
        <begin position="129"/>
        <end position="149"/>
    </location>
</feature>
<feature type="transmembrane region" description="Helical" evidence="1">
    <location>
        <begin position="156"/>
        <end position="176"/>
    </location>
</feature>
<feature type="transmembrane region" description="Helical" evidence="1">
    <location>
        <begin position="202"/>
        <end position="222"/>
    </location>
</feature>
<feature type="short sequence motif" description="NPA 1" evidence="1">
    <location>
        <begin position="63"/>
        <end position="65"/>
    </location>
</feature>
<feature type="short sequence motif" description="NPA 2" evidence="1">
    <location>
        <begin position="186"/>
        <end position="188"/>
    </location>
</feature>
<feature type="site" description="Involved in tetramerization or stability of the tetramer" evidence="1">
    <location>
        <position position="20"/>
    </location>
</feature>
<feature type="site" description="Selectivity filter" evidence="1">
    <location>
        <position position="43"/>
    </location>
</feature>
<feature type="site" description="Selectivity filter" evidence="1">
    <location>
        <position position="174"/>
    </location>
</feature>
<feature type="site" description="Selectivity filter" evidence="1">
    <location>
        <position position="183"/>
    </location>
</feature>
<feature type="site" description="Selectivity filter" evidence="1">
    <location>
        <position position="189"/>
    </location>
</feature>
<keyword id="KW-0997">Cell inner membrane</keyword>
<keyword id="KW-1003">Cell membrane</keyword>
<keyword id="KW-0472">Membrane</keyword>
<keyword id="KW-1185">Reference proteome</keyword>
<keyword id="KW-0677">Repeat</keyword>
<keyword id="KW-0812">Transmembrane</keyword>
<keyword id="KW-1133">Transmembrane helix</keyword>
<keyword id="KW-0813">Transport</keyword>
<dbReference type="EMBL" id="AE005174">
    <property type="protein sequence ID" value="AAG55257.1"/>
    <property type="molecule type" value="Genomic_DNA"/>
</dbReference>
<dbReference type="EMBL" id="BA000007">
    <property type="protein sequence ID" value="BAB34384.1"/>
    <property type="molecule type" value="Genomic_DNA"/>
</dbReference>
<dbReference type="PIR" id="A99749">
    <property type="entry name" value="A99749"/>
</dbReference>
<dbReference type="PIR" id="E85599">
    <property type="entry name" value="E85599"/>
</dbReference>
<dbReference type="RefSeq" id="NP_308988.1">
    <property type="nucleotide sequence ID" value="NC_002695.1"/>
</dbReference>
<dbReference type="RefSeq" id="WP_000488716.1">
    <property type="nucleotide sequence ID" value="NZ_VOAI01000006.1"/>
</dbReference>
<dbReference type="SMR" id="Q8X6K6"/>
<dbReference type="STRING" id="155864.Z1109"/>
<dbReference type="GeneID" id="75057926"/>
<dbReference type="GeneID" id="917703"/>
<dbReference type="KEGG" id="ece:Z1109"/>
<dbReference type="KEGG" id="ecs:ECs_0961"/>
<dbReference type="PATRIC" id="fig|386585.9.peg.1077"/>
<dbReference type="eggNOG" id="COG0580">
    <property type="taxonomic scope" value="Bacteria"/>
</dbReference>
<dbReference type="HOGENOM" id="CLU_020019_3_2_6"/>
<dbReference type="OMA" id="FKKKMFW"/>
<dbReference type="Proteomes" id="UP000000558">
    <property type="component" value="Chromosome"/>
</dbReference>
<dbReference type="Proteomes" id="UP000002519">
    <property type="component" value="Chromosome"/>
</dbReference>
<dbReference type="GO" id="GO:0005886">
    <property type="term" value="C:plasma membrane"/>
    <property type="evidence" value="ECO:0007669"/>
    <property type="project" value="UniProtKB-SubCell"/>
</dbReference>
<dbReference type="GO" id="GO:0015250">
    <property type="term" value="F:water channel activity"/>
    <property type="evidence" value="ECO:0007669"/>
    <property type="project" value="UniProtKB-UniRule"/>
</dbReference>
<dbReference type="CDD" id="cd00333">
    <property type="entry name" value="MIP"/>
    <property type="match status" value="1"/>
</dbReference>
<dbReference type="FunFam" id="1.20.1080.10:FF:000007">
    <property type="entry name" value="Aquaporin Z"/>
    <property type="match status" value="1"/>
</dbReference>
<dbReference type="Gene3D" id="1.20.1080.10">
    <property type="entry name" value="Glycerol uptake facilitator protein"/>
    <property type="match status" value="1"/>
</dbReference>
<dbReference type="HAMAP" id="MF_01146">
    <property type="entry name" value="Aquaporin_Z"/>
    <property type="match status" value="1"/>
</dbReference>
<dbReference type="InterPro" id="IPR023271">
    <property type="entry name" value="Aquaporin-like"/>
</dbReference>
<dbReference type="InterPro" id="IPR034294">
    <property type="entry name" value="Aquaporin_transptr"/>
</dbReference>
<dbReference type="InterPro" id="IPR023743">
    <property type="entry name" value="Aquaporin_Z"/>
</dbReference>
<dbReference type="InterPro" id="IPR000425">
    <property type="entry name" value="MIP"/>
</dbReference>
<dbReference type="InterPro" id="IPR022357">
    <property type="entry name" value="MIP_CS"/>
</dbReference>
<dbReference type="NCBIfam" id="TIGR00861">
    <property type="entry name" value="MIP"/>
    <property type="match status" value="1"/>
</dbReference>
<dbReference type="NCBIfam" id="NF003838">
    <property type="entry name" value="PRK05420.1"/>
    <property type="match status" value="1"/>
</dbReference>
<dbReference type="PANTHER" id="PTHR19139">
    <property type="entry name" value="AQUAPORIN TRANSPORTER"/>
    <property type="match status" value="1"/>
</dbReference>
<dbReference type="PANTHER" id="PTHR19139:SF199">
    <property type="entry name" value="MIP17260P"/>
    <property type="match status" value="1"/>
</dbReference>
<dbReference type="Pfam" id="PF00230">
    <property type="entry name" value="MIP"/>
    <property type="match status" value="1"/>
</dbReference>
<dbReference type="PRINTS" id="PR00783">
    <property type="entry name" value="MINTRINSICP"/>
</dbReference>
<dbReference type="SUPFAM" id="SSF81338">
    <property type="entry name" value="Aquaporin-like"/>
    <property type="match status" value="1"/>
</dbReference>
<dbReference type="PROSITE" id="PS00221">
    <property type="entry name" value="MIP"/>
    <property type="match status" value="1"/>
</dbReference>